<comment type="function">
    <text evidence="1 2">Epithelial ion channel that plays an important role in the regulation of epithelial ion and water transport and fluid homeostasis. Mediates the transport of chloride ions across the cell membrane (By similarity). Possesses an intrinsic ATPase activity and utilizes ATP to gate its channel; the passive flow of anions through the channel is gated by cycles of ATP binding and hydrolysis by the ATP-binding domains (By similarity). The ion channel is also permeable to HCO(3)(-); selectivity depends on the extracellular chloride concentration. Exerts its function also by modulating the activity of other ion channels and transporters. Contributes to the regulation of the pH and the ion content of the epithelial fluid layer (By similarity).</text>
</comment>
<comment type="catalytic activity">
    <reaction evidence="1">
        <text>ATP + H2O + closed Cl(-) channel = ADP + phosphate + open Cl(-) channel.</text>
        <dbReference type="EC" id="5.6.1.6"/>
    </reaction>
</comment>
<comment type="catalytic activity">
    <reaction evidence="1">
        <text>chloride(in) = chloride(out)</text>
        <dbReference type="Rhea" id="RHEA:29823"/>
        <dbReference type="ChEBI" id="CHEBI:17996"/>
    </reaction>
</comment>
<comment type="catalytic activity">
    <reaction evidence="1">
        <text>hydrogencarbonate(in) = hydrogencarbonate(out)</text>
        <dbReference type="Rhea" id="RHEA:28695"/>
        <dbReference type="ChEBI" id="CHEBI:17544"/>
    </reaction>
</comment>
<comment type="catalytic activity">
    <reaction evidence="1">
        <text>ATP + H2O = ADP + phosphate + H(+)</text>
        <dbReference type="Rhea" id="RHEA:13065"/>
        <dbReference type="ChEBI" id="CHEBI:15377"/>
        <dbReference type="ChEBI" id="CHEBI:15378"/>
        <dbReference type="ChEBI" id="CHEBI:30616"/>
        <dbReference type="ChEBI" id="CHEBI:43474"/>
        <dbReference type="ChEBI" id="CHEBI:456216"/>
    </reaction>
    <physiologicalReaction direction="left-to-right" evidence="1">
        <dbReference type="Rhea" id="RHEA:13066"/>
    </physiologicalReaction>
</comment>
<comment type="subunit">
    <text evidence="1">Monomer; does not require oligomerization for channel activity. May form oligomers in the membrane (By similarity).</text>
</comment>
<comment type="subcellular location">
    <subcellularLocation>
        <location evidence="7">Apical cell membrane</location>
        <topology evidence="1">Multi-pass membrane protein</topology>
    </subcellularLocation>
    <subcellularLocation>
        <location evidence="1">Early endosome membrane</location>
        <topology evidence="1">Multi-pass membrane protein</topology>
    </subcellularLocation>
    <subcellularLocation>
        <location evidence="2">Cell membrane</location>
        <topology evidence="1">Multi-pass membrane protein</topology>
    </subcellularLocation>
    <subcellularLocation>
        <location evidence="1">Recycling endosome membrane</location>
        <topology evidence="1">Multi-pass membrane protein</topology>
    </subcellularLocation>
    <subcellularLocation>
        <location evidence="1">Endoplasmic reticulum membrane</location>
        <topology evidence="1">Multi-pass membrane protein</topology>
    </subcellularLocation>
    <text evidence="1">The channel is internalized from the cell surface into an endosomal recycling compartment, from where it is recycled to the cell membrane.</text>
</comment>
<comment type="tissue specificity">
    <text evidence="7">Expressed in the rectal gland (at protein level).</text>
</comment>
<comment type="domain">
    <text evidence="1 2">Binds and hydrolyzes ATP via the two cytoplasmic ABC transporter nucleotide-binding domains. The two ATP-binding domains interact with each other, forming a head-to-tail dimer. Normal ATPase activity requires interaction between the two domains. The first ABC transporter nucleotide-binding domain has no ATPase activity by itself.</text>
</comment>
<comment type="domain">
    <text evidence="1">The disordered R region mediates channel activation when it is phosphorylated, but not in the absence of phosphorylation.</text>
</comment>
<comment type="PTM">
    <text evidence="1">Phosphorylated; cAMP treatment promotes phosphorylation and activates the channel. Dephosphorylation decreases the ATPase activity (in vitro). Phosphorylation at PKA sites activates the channel. Phosphorylation at PKC sites enhances the response to phosphorylation by PKA.</text>
</comment>
<comment type="similarity">
    <text evidence="8">Belongs to the ABC transporter superfamily. ABCC family. CFTR transporter (TC 3.A.1.202) subfamily.</text>
</comment>
<reference key="1">
    <citation type="journal article" date="1991" name="J. Biol. Chem.">
        <title>Identification and localization of a dogfish homolog of human cystic fibrosis transmembrane conductance regulator.</title>
        <authorList>
            <person name="Marshall J."/>
            <person name="Martin K.A."/>
            <person name="Picciotto M."/>
            <person name="Hockfield S."/>
            <person name="Nairn A.C."/>
            <person name="Kaczmarek L.K."/>
        </authorList>
    </citation>
    <scope>NUCLEOTIDE SEQUENCE [MRNA]</scope>
    <scope>SUBCELLULAR LOCATION</scope>
    <scope>TISSUE SPECIFICITY</scope>
    <source>
        <tissue>Rectal gland</tissue>
    </source>
</reference>
<organism>
    <name type="scientific">Squalus acanthias</name>
    <name type="common">Spiny dogfish</name>
    <dbReference type="NCBI Taxonomy" id="7797"/>
    <lineage>
        <taxon>Eukaryota</taxon>
        <taxon>Metazoa</taxon>
        <taxon>Chordata</taxon>
        <taxon>Craniata</taxon>
        <taxon>Vertebrata</taxon>
        <taxon>Chondrichthyes</taxon>
        <taxon>Elasmobranchii</taxon>
        <taxon>Squalomorphii</taxon>
        <taxon>Squaliformes</taxon>
        <taxon>Squalidae</taxon>
        <taxon>Squalus</taxon>
    </lineage>
</organism>
<feature type="chain" id="PRO_0000093431" description="Cystic fibrosis transmembrane conductance regulator">
    <location>
        <begin position="1"/>
        <end position="1492"/>
    </location>
</feature>
<feature type="topological domain" description="Cytoplasmic" evidence="1">
    <location>
        <begin position="1"/>
        <end position="78"/>
    </location>
</feature>
<feature type="transmembrane region" description="Helical; Name=1" evidence="1">
    <location>
        <begin position="79"/>
        <end position="99"/>
    </location>
</feature>
<feature type="topological domain" description="Extracellular" evidence="1">
    <location>
        <begin position="100"/>
        <end position="123"/>
    </location>
</feature>
<feature type="transmembrane region" description="Helical; Name=2" evidence="1">
    <location>
        <begin position="124"/>
        <end position="147"/>
    </location>
</feature>
<feature type="topological domain" description="Cytoplasmic" evidence="1">
    <location>
        <begin position="148"/>
        <end position="196"/>
    </location>
</feature>
<feature type="transmembrane region" description="Helical; Name=3" evidence="1">
    <location>
        <begin position="197"/>
        <end position="217"/>
    </location>
</feature>
<feature type="topological domain" description="Extracellular" evidence="1">
    <location>
        <begin position="218"/>
        <end position="223"/>
    </location>
</feature>
<feature type="transmembrane region" description="Helical; Name=4" evidence="1">
    <location>
        <begin position="224"/>
        <end position="244"/>
    </location>
</feature>
<feature type="topological domain" description="Cytoplasmic" evidence="1">
    <location>
        <begin position="245"/>
        <end position="299"/>
    </location>
</feature>
<feature type="transmembrane region" description="Helical; Name=5" evidence="1">
    <location>
        <begin position="300"/>
        <end position="320"/>
    </location>
</feature>
<feature type="topological domain" description="Extracellular" evidence="1">
    <location>
        <begin position="321"/>
        <end position="340"/>
    </location>
</feature>
<feature type="transmembrane region" description="Helical; Name=6" evidence="1">
    <location>
        <begin position="341"/>
        <end position="359"/>
    </location>
</feature>
<feature type="topological domain" description="Cytoplasmic" evidence="1">
    <location>
        <begin position="360"/>
        <end position="867"/>
    </location>
</feature>
<feature type="transmembrane region" description="Helical; Name=7" evidence="1">
    <location>
        <begin position="868"/>
        <end position="888"/>
    </location>
</feature>
<feature type="topological domain" description="Extracellular" evidence="1">
    <location>
        <begin position="889"/>
        <end position="932"/>
    </location>
</feature>
<feature type="transmembrane region" description="Discontinuously helical; Name=8" evidence="1">
    <location>
        <begin position="933"/>
        <end position="953"/>
    </location>
</feature>
<feature type="topological domain" description="Cytoplasmic" evidence="1">
    <location>
        <begin position="954"/>
        <end position="1004"/>
    </location>
</feature>
<feature type="transmembrane region" description="Helical; Name=9" evidence="1">
    <location>
        <begin position="1005"/>
        <end position="1025"/>
    </location>
</feature>
<feature type="topological domain" description="Extracellular" evidence="1">
    <location>
        <begin position="1026"/>
        <end position="1027"/>
    </location>
</feature>
<feature type="transmembrane region" description="Helical; Name=10" evidence="1">
    <location>
        <begin position="1028"/>
        <end position="1048"/>
    </location>
</feature>
<feature type="topological domain" description="Cytoplasmic" evidence="1">
    <location>
        <begin position="1049"/>
        <end position="1109"/>
    </location>
</feature>
<feature type="transmembrane region" description="Helical; Name=11" evidence="1">
    <location>
        <begin position="1110"/>
        <end position="1130"/>
    </location>
</feature>
<feature type="topological domain" description="Extracellular" evidence="1">
    <location>
        <begin position="1131"/>
        <end position="1144"/>
    </location>
</feature>
<feature type="transmembrane region" description="Helical; Name=12" evidence="1">
    <location>
        <begin position="1145"/>
        <end position="1165"/>
    </location>
</feature>
<feature type="topological domain" description="Cytoplasmic" evidence="1">
    <location>
        <begin position="1166"/>
        <end position="1492"/>
    </location>
</feature>
<feature type="domain" description="ABC transmembrane type-1 1" evidence="5">
    <location>
        <begin position="82"/>
        <end position="366"/>
    </location>
</feature>
<feature type="domain" description="ABC transporter 1" evidence="4">
    <location>
        <begin position="424"/>
        <end position="647"/>
    </location>
</feature>
<feature type="domain" description="ABC transmembrane type-1 2" evidence="5">
    <location>
        <begin position="868"/>
        <end position="1169"/>
    </location>
</feature>
<feature type="domain" description="ABC transporter 2" evidence="4">
    <location>
        <begin position="1220"/>
        <end position="1453"/>
    </location>
</feature>
<feature type="region of interest" description="Disordered R region" evidence="1">
    <location>
        <begin position="655"/>
        <end position="840"/>
    </location>
</feature>
<feature type="region of interest" description="Disordered" evidence="6">
    <location>
        <begin position="1465"/>
        <end position="1492"/>
    </location>
</feature>
<feature type="short sequence motif" description="PDZ-binding" evidence="1">
    <location>
        <begin position="1483"/>
        <end position="1485"/>
    </location>
</feature>
<feature type="compositionally biased region" description="Basic residues" evidence="6">
    <location>
        <begin position="1465"/>
        <end position="1474"/>
    </location>
</feature>
<feature type="compositionally biased region" description="Acidic residues" evidence="6">
    <location>
        <begin position="1481"/>
        <end position="1492"/>
    </location>
</feature>
<feature type="binding site" evidence="1">
    <location>
        <position position="402"/>
    </location>
    <ligand>
        <name>ATP</name>
        <dbReference type="ChEBI" id="CHEBI:30616"/>
        <label>1</label>
    </ligand>
</feature>
<feature type="binding site" evidence="1">
    <location>
        <position position="435"/>
    </location>
    <ligand>
        <name>ATP</name>
        <dbReference type="ChEBI" id="CHEBI:30616"/>
        <label>1</label>
    </ligand>
</feature>
<feature type="binding site" evidence="4">
    <location>
        <begin position="459"/>
        <end position="466"/>
    </location>
    <ligand>
        <name>ATP</name>
        <dbReference type="ChEBI" id="CHEBI:30616"/>
        <label>1</label>
    </ligand>
</feature>
<feature type="binding site" evidence="2">
    <location>
        <position position="494"/>
    </location>
    <ligand>
        <name>ATP</name>
        <dbReference type="ChEBI" id="CHEBI:30616"/>
        <label>1</label>
    </ligand>
</feature>
<feature type="binding site" evidence="1">
    <location>
        <position position="1229"/>
    </location>
    <ligand>
        <name>ATP</name>
        <dbReference type="ChEBI" id="CHEBI:30616"/>
        <label>2</label>
    </ligand>
</feature>
<feature type="binding site" evidence="4">
    <location>
        <begin position="1254"/>
        <end position="1261"/>
    </location>
    <ligand>
        <name>ATP</name>
        <dbReference type="ChEBI" id="CHEBI:30616"/>
        <label>2</label>
    </ligand>
</feature>
<feature type="glycosylation site" description="N-linked (GlcNAc...) asparagine" evidence="3">
    <location>
        <position position="905"/>
    </location>
</feature>
<feature type="glycosylation site" description="N-linked (GlcNAc...) asparagine" evidence="3">
    <location>
        <position position="923"/>
    </location>
</feature>
<protein>
    <recommendedName>
        <fullName evidence="1">Cystic fibrosis transmembrane conductance regulator</fullName>
        <shortName>CFTR</shortName>
    </recommendedName>
    <alternativeName>
        <fullName>ATP-binding cassette sub-family C member 7</fullName>
    </alternativeName>
    <alternativeName>
        <fullName>Channel conductance-controlling ATPase</fullName>
        <ecNumber evidence="1">5.6.1.6</ecNumber>
    </alternativeName>
    <alternativeName>
        <fullName>Dogfish transmembrane conductance regulator</fullName>
    </alternativeName>
    <alternativeName>
        <fullName>cAMP-dependent chloride channel</fullName>
    </alternativeName>
</protein>
<sequence length="1492" mass="169385">MQRSPIEKANAFSKLFFRWPRPILKKGYRQKLELSDIYQIPSSDSADELSEMLEREWDRELATSKKNPKLVNALRRCFFWRFLFYGILLYFVEFTKAVQPLCLGRIIASYNAKNTYEREIAYYLALGLCLLFVVRTLFLHPAVFGLQHLGMQMRIALFSLIYKKILKMSSRVLDKIDTGQLVSLLSNNLNKFDEGVAVAHFVWIAPVQVVLLMGLIWNELTEFVFCGLGFLIMLALFQAWLGKKMMQYRDKRAGKINERLAITSEIIDNIQSVKVYCWEDAMEKIIDDIRQVELKLTRKVAYCRYFSSSAFFFSGFFVVFLSVVPYAFIHTIKLRRIFTTISYNIVLRMTVTRQFPSAIQTWYDSLGAIRKIQDFLHKDEHKTVEYNLTTKEVEMVNVTASWDEGIGELFEKVKQNDSERKMANGDDGLFFSNFSLHVTPVLKNISFKLEKGELLAIAGSTGSGKSSLLMMIMGELEPSDGKIKHSGRISYSPQVPWIMPGTIKDNIIFGLSYDEYRYTSVVNACQLEEDITVFPNKDKTVLGDGGITLSGGQRARISLARALYKDADLYLLDSPFSHLDVTTEKDIFESCLCKLMVNKTRILVTSKLEHLKKADKILLLHEGHCYFYGTFSELQGEKPDFSSQLLGSVHFDSFSAERRNSILTETFRRCSVSSGDGAGLGSYSETRKASFKQPPPEFNEKRKSSLIVNPITSNKKFSLVQTAMSYPQTNGMEDATSEPGERHFSLIPENELGEPTKPRSNIFKSELPFQAHRRQSVLALMTHSSTSPNKIHARRSAVRKMSMLSQTNFASSEIDIYSRRLSEDGSFEISEEINEEDLKECFADEEEIQNVTTTWSTYLRYVTTNRNLVFVLILCLVIFLAEVAASLAGLWIISGLAINTGSQTNDTSTDLSHLSVFSKFITNGSHYYIFYIYVGLADSFLALGVIRGLPLVHTLVTVSKDLHKQMLHSVLQGPMTAFNKMKAGRILNRFIKDTAIIDDMLPLTVFDFVQLILIVVGAICVVSVLQPYTLLAAIPVAVIFIMLRAYFLRTSQQLKQLESEARSPIFSHLITSLRGLWTVRAFGRQSYFETLFHKALNLHTANWFLYLSTLRWFQMRIDIVFVLFFIAVTFIAIATHDVGEGQVGIILTLAMNITSTLQWAVNSSIDVDGLMRSVSRVFKYIDIPPEGSETKNRHNANNPSDVLVIENKHLTKEWPSGGQMMVNNLTAKYTSDGRAVLQDLSFSVNAGQRVGLLGRTGAGKSTLLSALLRLLSTEGEIQIDGISWNSVSLQKWRKAFGVIPQKVFVFSGTFRKNLDPYEQWSDEEIWKVTEEVGLKSMIEQFPDKLNFVLVDGGYILSNGHKQLMCLARSILSKAKILLLDEPTAHLDPVTFQIIRKTLKHTFSNCTVILSEHRVEALLECQQFLVIEGCSVKQFDALQKLLTEASLFKQVFGHLDRAKLFTAHRRNSSKRKTRPKISALQEEAEEDLQETRL</sequence>
<keyword id="KW-0067">ATP-binding</keyword>
<keyword id="KW-1003">Cell membrane</keyword>
<keyword id="KW-0868">Chloride</keyword>
<keyword id="KW-0869">Chloride channel</keyword>
<keyword id="KW-0256">Endoplasmic reticulum</keyword>
<keyword id="KW-0967">Endosome</keyword>
<keyword id="KW-0325">Glycoprotein</keyword>
<keyword id="KW-0407">Ion channel</keyword>
<keyword id="KW-0406">Ion transport</keyword>
<keyword id="KW-0413">Isomerase</keyword>
<keyword id="KW-0472">Membrane</keyword>
<keyword id="KW-0547">Nucleotide-binding</keyword>
<keyword id="KW-0597">Phosphoprotein</keyword>
<keyword id="KW-0677">Repeat</keyword>
<keyword id="KW-0812">Transmembrane</keyword>
<keyword id="KW-1133">Transmembrane helix</keyword>
<keyword id="KW-0813">Transport</keyword>
<dbReference type="EC" id="5.6.1.6" evidence="1"/>
<dbReference type="EMBL" id="M83785">
    <property type="protein sequence ID" value="AAA49616.1"/>
    <property type="molecule type" value="mRNA"/>
</dbReference>
<dbReference type="PIR" id="A39322">
    <property type="entry name" value="A39322"/>
</dbReference>
<dbReference type="SMR" id="P26362"/>
<dbReference type="GlyCosmos" id="P26362">
    <property type="glycosylation" value="2 sites, No reported glycans"/>
</dbReference>
<dbReference type="GO" id="GO:0016324">
    <property type="term" value="C:apical plasma membrane"/>
    <property type="evidence" value="ECO:0007669"/>
    <property type="project" value="UniProtKB-SubCell"/>
</dbReference>
<dbReference type="GO" id="GO:0034707">
    <property type="term" value="C:chloride channel complex"/>
    <property type="evidence" value="ECO:0007669"/>
    <property type="project" value="UniProtKB-KW"/>
</dbReference>
<dbReference type="GO" id="GO:0005829">
    <property type="term" value="C:cytosol"/>
    <property type="evidence" value="ECO:0007669"/>
    <property type="project" value="TreeGrafter"/>
</dbReference>
<dbReference type="GO" id="GO:0031901">
    <property type="term" value="C:early endosome membrane"/>
    <property type="evidence" value="ECO:0007669"/>
    <property type="project" value="UniProtKB-SubCell"/>
</dbReference>
<dbReference type="GO" id="GO:0005789">
    <property type="term" value="C:endoplasmic reticulum membrane"/>
    <property type="evidence" value="ECO:0000250"/>
    <property type="project" value="UniProtKB"/>
</dbReference>
<dbReference type="GO" id="GO:0016020">
    <property type="term" value="C:membrane"/>
    <property type="evidence" value="ECO:0000250"/>
    <property type="project" value="UniProtKB"/>
</dbReference>
<dbReference type="GO" id="GO:0005886">
    <property type="term" value="C:plasma membrane"/>
    <property type="evidence" value="ECO:0000250"/>
    <property type="project" value="UniProtKB"/>
</dbReference>
<dbReference type="GO" id="GO:0055038">
    <property type="term" value="C:recycling endosome membrane"/>
    <property type="evidence" value="ECO:0007669"/>
    <property type="project" value="UniProtKB-SubCell"/>
</dbReference>
<dbReference type="GO" id="GO:0140359">
    <property type="term" value="F:ABC-type transporter activity"/>
    <property type="evidence" value="ECO:0007669"/>
    <property type="project" value="InterPro"/>
</dbReference>
<dbReference type="GO" id="GO:0005524">
    <property type="term" value="F:ATP binding"/>
    <property type="evidence" value="ECO:0007669"/>
    <property type="project" value="UniProtKB-KW"/>
</dbReference>
<dbReference type="GO" id="GO:0016887">
    <property type="term" value="F:ATP hydrolysis activity"/>
    <property type="evidence" value="ECO:0000250"/>
    <property type="project" value="UniProtKB"/>
</dbReference>
<dbReference type="GO" id="GO:0015106">
    <property type="term" value="F:bicarbonate transmembrane transporter activity"/>
    <property type="evidence" value="ECO:0000250"/>
    <property type="project" value="UniProtKB"/>
</dbReference>
<dbReference type="GO" id="GO:0005254">
    <property type="term" value="F:chloride channel activity"/>
    <property type="evidence" value="ECO:0000250"/>
    <property type="project" value="UniProtKB"/>
</dbReference>
<dbReference type="GO" id="GO:0015108">
    <property type="term" value="F:chloride transmembrane transporter activity"/>
    <property type="evidence" value="ECO:0000250"/>
    <property type="project" value="UniProtKB"/>
</dbReference>
<dbReference type="GO" id="GO:0005260">
    <property type="term" value="F:intracellularly ATP-gated chloride channel activity"/>
    <property type="evidence" value="ECO:0000250"/>
    <property type="project" value="UniProtKB"/>
</dbReference>
<dbReference type="GO" id="GO:0015701">
    <property type="term" value="P:bicarbonate transport"/>
    <property type="evidence" value="ECO:0000250"/>
    <property type="project" value="UniProtKB"/>
</dbReference>
<dbReference type="GO" id="GO:0071320">
    <property type="term" value="P:cellular response to cAMP"/>
    <property type="evidence" value="ECO:0000250"/>
    <property type="project" value="UniProtKB"/>
</dbReference>
<dbReference type="GO" id="GO:1904322">
    <property type="term" value="P:cellular response to forskolin"/>
    <property type="evidence" value="ECO:0000250"/>
    <property type="project" value="UniProtKB"/>
</dbReference>
<dbReference type="GO" id="GO:1902476">
    <property type="term" value="P:chloride transmembrane transport"/>
    <property type="evidence" value="ECO:0000250"/>
    <property type="project" value="UniProtKB"/>
</dbReference>
<dbReference type="GO" id="GO:0051454">
    <property type="term" value="P:intracellular pH elevation"/>
    <property type="evidence" value="ECO:0000250"/>
    <property type="project" value="UniProtKB"/>
</dbReference>
<dbReference type="GO" id="GO:0060081">
    <property type="term" value="P:membrane hyperpolarization"/>
    <property type="evidence" value="ECO:0000250"/>
    <property type="project" value="UniProtKB"/>
</dbReference>
<dbReference type="GO" id="GO:0050891">
    <property type="term" value="P:multicellular organismal-level water homeostasis"/>
    <property type="evidence" value="ECO:0000250"/>
    <property type="project" value="UniProtKB"/>
</dbReference>
<dbReference type="GO" id="GO:0048240">
    <property type="term" value="P:sperm capacitation"/>
    <property type="evidence" value="ECO:0000250"/>
    <property type="project" value="UniProtKB"/>
</dbReference>
<dbReference type="GO" id="GO:0035377">
    <property type="term" value="P:transepithelial water transport"/>
    <property type="evidence" value="ECO:0000250"/>
    <property type="project" value="UniProtKB"/>
</dbReference>
<dbReference type="CDD" id="cd18594">
    <property type="entry name" value="ABC_6TM_CFTR_D1"/>
    <property type="match status" value="1"/>
</dbReference>
<dbReference type="FunFam" id="1.20.1560.10:FF:000017">
    <property type="entry name" value="Cystic fibrosis transmembrane conductance regulator"/>
    <property type="match status" value="1"/>
</dbReference>
<dbReference type="FunFam" id="1.20.1560.10:FF:000019">
    <property type="entry name" value="Cystic fibrosis transmembrane conductance regulator"/>
    <property type="match status" value="1"/>
</dbReference>
<dbReference type="FunFam" id="3.40.50.300:FF:000581">
    <property type="entry name" value="Cystic fibrosis transmembrane conductance regulator"/>
    <property type="match status" value="1"/>
</dbReference>
<dbReference type="FunFam" id="3.40.50.300:FF:000591">
    <property type="entry name" value="Cystic fibrosis transmembrane conductance regulator"/>
    <property type="match status" value="1"/>
</dbReference>
<dbReference type="Gene3D" id="1.20.1560.10">
    <property type="entry name" value="ABC transporter type 1, transmembrane domain"/>
    <property type="match status" value="2"/>
</dbReference>
<dbReference type="Gene3D" id="3.40.50.300">
    <property type="entry name" value="P-loop containing nucleotide triphosphate hydrolases"/>
    <property type="match status" value="2"/>
</dbReference>
<dbReference type="InterPro" id="IPR003593">
    <property type="entry name" value="AAA+_ATPase"/>
</dbReference>
<dbReference type="InterPro" id="IPR011527">
    <property type="entry name" value="ABC1_TM_dom"/>
</dbReference>
<dbReference type="InterPro" id="IPR036640">
    <property type="entry name" value="ABC1_TM_sf"/>
</dbReference>
<dbReference type="InterPro" id="IPR003439">
    <property type="entry name" value="ABC_transporter-like_ATP-bd"/>
</dbReference>
<dbReference type="InterPro" id="IPR017871">
    <property type="entry name" value="ABC_transporter-like_CS"/>
</dbReference>
<dbReference type="InterPro" id="IPR050173">
    <property type="entry name" value="ABC_transporter_C-like"/>
</dbReference>
<dbReference type="InterPro" id="IPR009147">
    <property type="entry name" value="CFTR/ABCC7"/>
</dbReference>
<dbReference type="InterPro" id="IPR025837">
    <property type="entry name" value="CFTR_reg_dom"/>
</dbReference>
<dbReference type="InterPro" id="IPR027417">
    <property type="entry name" value="P-loop_NTPase"/>
</dbReference>
<dbReference type="NCBIfam" id="TIGR01271">
    <property type="entry name" value="CFTR_protein"/>
    <property type="match status" value="1"/>
</dbReference>
<dbReference type="PANTHER" id="PTHR24223">
    <property type="entry name" value="ATP-BINDING CASSETTE SUB-FAMILY C"/>
    <property type="match status" value="1"/>
</dbReference>
<dbReference type="PANTHER" id="PTHR24223:SF19">
    <property type="entry name" value="CYSTIC FIBROSIS TRANSMEMBRANE CONDUCTANCE REGULATOR"/>
    <property type="match status" value="1"/>
</dbReference>
<dbReference type="Pfam" id="PF00664">
    <property type="entry name" value="ABC_membrane"/>
    <property type="match status" value="2"/>
</dbReference>
<dbReference type="Pfam" id="PF00005">
    <property type="entry name" value="ABC_tran"/>
    <property type="match status" value="2"/>
</dbReference>
<dbReference type="Pfam" id="PF14396">
    <property type="entry name" value="CFTR_R"/>
    <property type="match status" value="1"/>
</dbReference>
<dbReference type="PRINTS" id="PR01851">
    <property type="entry name" value="CYSFIBREGLTR"/>
</dbReference>
<dbReference type="SMART" id="SM00382">
    <property type="entry name" value="AAA"/>
    <property type="match status" value="2"/>
</dbReference>
<dbReference type="SUPFAM" id="SSF90123">
    <property type="entry name" value="ABC transporter transmembrane region"/>
    <property type="match status" value="2"/>
</dbReference>
<dbReference type="SUPFAM" id="SSF52540">
    <property type="entry name" value="P-loop containing nucleoside triphosphate hydrolases"/>
    <property type="match status" value="2"/>
</dbReference>
<dbReference type="PROSITE" id="PS50929">
    <property type="entry name" value="ABC_TM1F"/>
    <property type="match status" value="2"/>
</dbReference>
<dbReference type="PROSITE" id="PS00211">
    <property type="entry name" value="ABC_TRANSPORTER_1"/>
    <property type="match status" value="1"/>
</dbReference>
<dbReference type="PROSITE" id="PS50893">
    <property type="entry name" value="ABC_TRANSPORTER_2"/>
    <property type="match status" value="2"/>
</dbReference>
<gene>
    <name evidence="1" type="primary">CFTR</name>
    <name type="synonym">ABCC7</name>
    <name type="synonym">DFTR</name>
</gene>
<name>CFTR_SQUAC</name>
<evidence type="ECO:0000250" key="1">
    <source>
        <dbReference type="UniProtKB" id="P13569"/>
    </source>
</evidence>
<evidence type="ECO:0000250" key="2">
    <source>
        <dbReference type="UniProtKB" id="P26361"/>
    </source>
</evidence>
<evidence type="ECO:0000255" key="3"/>
<evidence type="ECO:0000255" key="4">
    <source>
        <dbReference type="PROSITE-ProRule" id="PRU00434"/>
    </source>
</evidence>
<evidence type="ECO:0000255" key="5">
    <source>
        <dbReference type="PROSITE-ProRule" id="PRU00441"/>
    </source>
</evidence>
<evidence type="ECO:0000256" key="6">
    <source>
        <dbReference type="SAM" id="MobiDB-lite"/>
    </source>
</evidence>
<evidence type="ECO:0000269" key="7">
    <source>
    </source>
</evidence>
<evidence type="ECO:0000305" key="8"/>
<accession>P26362</accession>
<proteinExistence type="evidence at protein level"/>